<organism>
    <name type="scientific">Lactococcus lactis subsp. lactis (strain IL1403)</name>
    <name type="common">Streptococcus lactis</name>
    <dbReference type="NCBI Taxonomy" id="272623"/>
    <lineage>
        <taxon>Bacteria</taxon>
        <taxon>Bacillati</taxon>
        <taxon>Bacillota</taxon>
        <taxon>Bacilli</taxon>
        <taxon>Lactobacillales</taxon>
        <taxon>Streptococcaceae</taxon>
        <taxon>Lactococcus</taxon>
    </lineage>
</organism>
<keyword id="KW-0067">ATP-binding</keyword>
<keyword id="KW-0143">Chaperone</keyword>
<keyword id="KW-0479">Metal-binding</keyword>
<keyword id="KW-0547">Nucleotide-binding</keyword>
<keyword id="KW-1185">Reference proteome</keyword>
<keyword id="KW-0677">Repeat</keyword>
<keyword id="KW-0346">Stress response</keyword>
<keyword id="KW-0862">Zinc</keyword>
<keyword id="KW-0863">Zinc-finger</keyword>
<gene>
    <name type="primary">clpE</name>
    <name type="ordered locus">LL0557</name>
    <name type="ORF">L0221</name>
</gene>
<feature type="chain" id="PRO_0000191225" description="ATP-dependent Clp protease ATP-binding subunit ClpE">
    <location>
        <begin position="1"/>
        <end position="748"/>
    </location>
</feature>
<feature type="domain" description="UVR" evidence="3">
    <location>
        <begin position="359"/>
        <end position="394"/>
    </location>
</feature>
<feature type="zinc finger region" description="C4-type" evidence="2">
    <location>
        <begin position="3"/>
        <end position="32"/>
    </location>
</feature>
<feature type="region of interest" description="Disordered" evidence="4">
    <location>
        <begin position="74"/>
        <end position="105"/>
    </location>
</feature>
<feature type="region of interest" description="I">
    <location>
        <begin position="107"/>
        <end position="354"/>
    </location>
</feature>
<feature type="region of interest" description="II">
    <location>
        <begin position="407"/>
        <end position="598"/>
    </location>
</feature>
<feature type="binding site" evidence="2">
    <location>
        <begin position="152"/>
        <end position="159"/>
    </location>
    <ligand>
        <name>ATP</name>
        <dbReference type="ChEBI" id="CHEBI:30616"/>
    </ligand>
</feature>
<feature type="binding site" evidence="2">
    <location>
        <begin position="481"/>
        <end position="488"/>
    </location>
    <ligand>
        <name>ATP</name>
        <dbReference type="ChEBI" id="CHEBI:30616"/>
    </ligand>
</feature>
<name>CLPE_LACLA</name>
<accession>Q9CI09</accession>
<dbReference type="EMBL" id="AE005176">
    <property type="protein sequence ID" value="AAK04655.1"/>
    <property type="molecule type" value="Genomic_DNA"/>
</dbReference>
<dbReference type="PIR" id="E86694">
    <property type="entry name" value="E86694"/>
</dbReference>
<dbReference type="RefSeq" id="NP_266713.1">
    <property type="nucleotide sequence ID" value="NC_002662.1"/>
</dbReference>
<dbReference type="RefSeq" id="WP_003130823.1">
    <property type="nucleotide sequence ID" value="NC_002662.1"/>
</dbReference>
<dbReference type="SMR" id="Q9CI09"/>
<dbReference type="PaxDb" id="272623-L0221"/>
<dbReference type="EnsemblBacteria" id="AAK04655">
    <property type="protein sequence ID" value="AAK04655"/>
    <property type="gene ID" value="L0221"/>
</dbReference>
<dbReference type="KEGG" id="lla:L0221"/>
<dbReference type="PATRIC" id="fig|272623.7.peg.595"/>
<dbReference type="eggNOG" id="COG0542">
    <property type="taxonomic scope" value="Bacteria"/>
</dbReference>
<dbReference type="HOGENOM" id="CLU_005070_4_3_9"/>
<dbReference type="OrthoDB" id="9803641at2"/>
<dbReference type="Proteomes" id="UP000002196">
    <property type="component" value="Chromosome"/>
</dbReference>
<dbReference type="GO" id="GO:0005737">
    <property type="term" value="C:cytoplasm"/>
    <property type="evidence" value="ECO:0007669"/>
    <property type="project" value="TreeGrafter"/>
</dbReference>
<dbReference type="GO" id="GO:0005524">
    <property type="term" value="F:ATP binding"/>
    <property type="evidence" value="ECO:0007669"/>
    <property type="project" value="UniProtKB-KW"/>
</dbReference>
<dbReference type="GO" id="GO:0016887">
    <property type="term" value="F:ATP hydrolysis activity"/>
    <property type="evidence" value="ECO:0007669"/>
    <property type="project" value="InterPro"/>
</dbReference>
<dbReference type="GO" id="GO:0008270">
    <property type="term" value="F:zinc ion binding"/>
    <property type="evidence" value="ECO:0007669"/>
    <property type="project" value="UniProtKB-KW"/>
</dbReference>
<dbReference type="GO" id="GO:0034605">
    <property type="term" value="P:cellular response to heat"/>
    <property type="evidence" value="ECO:0007669"/>
    <property type="project" value="TreeGrafter"/>
</dbReference>
<dbReference type="CDD" id="cd00009">
    <property type="entry name" value="AAA"/>
    <property type="match status" value="1"/>
</dbReference>
<dbReference type="CDD" id="cd19499">
    <property type="entry name" value="RecA-like_ClpB_Hsp104-like"/>
    <property type="match status" value="1"/>
</dbReference>
<dbReference type="FunFam" id="3.40.50.300:FF:000025">
    <property type="entry name" value="ATP-dependent Clp protease subunit"/>
    <property type="match status" value="1"/>
</dbReference>
<dbReference type="FunFam" id="3.40.50.300:FF:000010">
    <property type="entry name" value="Chaperone clpB 1, putative"/>
    <property type="match status" value="1"/>
</dbReference>
<dbReference type="Gene3D" id="1.10.8.60">
    <property type="match status" value="2"/>
</dbReference>
<dbReference type="Gene3D" id="3.40.50.300">
    <property type="entry name" value="P-loop containing nucleotide triphosphate hydrolases"/>
    <property type="match status" value="2"/>
</dbReference>
<dbReference type="Gene3D" id="4.10.860.10">
    <property type="entry name" value="UVR domain"/>
    <property type="match status" value="1"/>
</dbReference>
<dbReference type="InterPro" id="IPR003593">
    <property type="entry name" value="AAA+_ATPase"/>
</dbReference>
<dbReference type="InterPro" id="IPR003959">
    <property type="entry name" value="ATPase_AAA_core"/>
</dbReference>
<dbReference type="InterPro" id="IPR019489">
    <property type="entry name" value="Clp_ATPase_C"/>
</dbReference>
<dbReference type="InterPro" id="IPR001270">
    <property type="entry name" value="ClpA/B"/>
</dbReference>
<dbReference type="InterPro" id="IPR018368">
    <property type="entry name" value="ClpA/B_CS1"/>
</dbReference>
<dbReference type="InterPro" id="IPR028299">
    <property type="entry name" value="ClpA/B_CS2"/>
</dbReference>
<dbReference type="InterPro" id="IPR041546">
    <property type="entry name" value="ClpA/ClpB_AAA_lid"/>
</dbReference>
<dbReference type="InterPro" id="IPR050130">
    <property type="entry name" value="ClpA_ClpB"/>
</dbReference>
<dbReference type="InterPro" id="IPR027417">
    <property type="entry name" value="P-loop_NTPase"/>
</dbReference>
<dbReference type="InterPro" id="IPR001943">
    <property type="entry name" value="UVR_dom"/>
</dbReference>
<dbReference type="InterPro" id="IPR036876">
    <property type="entry name" value="UVR_dom_sf"/>
</dbReference>
<dbReference type="PANTHER" id="PTHR11638">
    <property type="entry name" value="ATP-DEPENDENT CLP PROTEASE"/>
    <property type="match status" value="1"/>
</dbReference>
<dbReference type="PANTHER" id="PTHR11638:SF175">
    <property type="entry name" value="ATP-DEPENDENT CLP PROTEASE, ATP-BINDING SUBUNIT CLPC"/>
    <property type="match status" value="1"/>
</dbReference>
<dbReference type="Pfam" id="PF00004">
    <property type="entry name" value="AAA"/>
    <property type="match status" value="1"/>
</dbReference>
<dbReference type="Pfam" id="PF07724">
    <property type="entry name" value="AAA_2"/>
    <property type="match status" value="1"/>
</dbReference>
<dbReference type="Pfam" id="PF17871">
    <property type="entry name" value="AAA_lid_9"/>
    <property type="match status" value="1"/>
</dbReference>
<dbReference type="Pfam" id="PF10431">
    <property type="entry name" value="ClpB_D2-small"/>
    <property type="match status" value="1"/>
</dbReference>
<dbReference type="PRINTS" id="PR00300">
    <property type="entry name" value="CLPPROTEASEA"/>
</dbReference>
<dbReference type="SMART" id="SM00382">
    <property type="entry name" value="AAA"/>
    <property type="match status" value="2"/>
</dbReference>
<dbReference type="SMART" id="SM01086">
    <property type="entry name" value="ClpB_D2-small"/>
    <property type="match status" value="1"/>
</dbReference>
<dbReference type="SUPFAM" id="SSF46600">
    <property type="entry name" value="C-terminal UvrC-binding domain of UvrB"/>
    <property type="match status" value="1"/>
</dbReference>
<dbReference type="SUPFAM" id="SSF52540">
    <property type="entry name" value="P-loop containing nucleoside triphosphate hydrolases"/>
    <property type="match status" value="2"/>
</dbReference>
<dbReference type="PROSITE" id="PS00870">
    <property type="entry name" value="CLPAB_1"/>
    <property type="match status" value="1"/>
</dbReference>
<dbReference type="PROSITE" id="PS00871">
    <property type="entry name" value="CLPAB_2"/>
    <property type="match status" value="1"/>
</dbReference>
<dbReference type="PROSITE" id="PS50151">
    <property type="entry name" value="UVR"/>
    <property type="match status" value="1"/>
</dbReference>
<protein>
    <recommendedName>
        <fullName>ATP-dependent Clp protease ATP-binding subunit ClpE</fullName>
    </recommendedName>
</protein>
<sequence length="748" mass="83145">MLCQNCNINEATIHLYTSVNGQKKQIDLCQNCYQIMKSGGQEALFGAGNASNGNSDEPFNPFNDIFSALHGQDFNGAASTQTPPTQTGGRGPRGPQNPRAKQPKGMLEEFGINITESARRGEIDPVIGRDEEIKRVIEILNRRTKNNPVLIGEPGVGKTAVVEGLAQKIVDGDVPQKLQNKEVIRLDVVSLVQGTGIRGQFEERMQKLMDEIRKRNDVIMFIDEIHEIVGAGSAGDGNMDAGNILKPALARGELQLVGATTLNEYRIIEKDAALERRMQPVKVDEPSVDETITILRGIQARYEDYHHVKYTDEAIEAAAHLSNRYIQDRFLPDKAIDLLDESGSKKNLTLKFVDPEDINRRIADAETKKNEATQAEDFEKAAHFRDQITKLRELQNHEVSDDEIPVITEKDIEQIVEQKTHIPVGDLKEKEQTQLINLADDLKAHVIGQDEAVDKIAKAIRRSRVGLGKPNRPIGSFLFVGPTGVGKTELAKQLAKELFGSSESMIRFDMSEYMEKHSVAKLIGAPPGYVGYEEAGQLTERVRRNPYSLILLDEIEKAHPDVMHMFLQILEDGRLTDAQGRTVSFKDSLIIMTSNAGTGKVEASVGFGAAREGRTKSVLGQLGDFFSPEFMNRFDGIIEFSALSKENLLKIVDLMLDEVNEQIGRNDIHLSVTQAAKEKLVDLGYNPAMGARPLRRTIQENIEDSIADFYIEHPEYKELVADLIDDKIVISNQAQETAETTDEEVPAE</sequence>
<proteinExistence type="inferred from homology"/>
<comment type="function">
    <text evidence="1">Could be necessary for degrading proteins generated by certain types of stress.</text>
</comment>
<comment type="induction">
    <text evidence="5">By heat shock.</text>
</comment>
<comment type="similarity">
    <text evidence="5">Belongs to the ClpA/ClpB family. ClpE subfamily.</text>
</comment>
<reference key="1">
    <citation type="journal article" date="2001" name="Genome Res.">
        <title>The complete genome sequence of the lactic acid bacterium Lactococcus lactis ssp. lactis IL1403.</title>
        <authorList>
            <person name="Bolotin A."/>
            <person name="Wincker P."/>
            <person name="Mauger S."/>
            <person name="Jaillon O."/>
            <person name="Malarme K."/>
            <person name="Weissenbach J."/>
            <person name="Ehrlich S.D."/>
            <person name="Sorokin A."/>
        </authorList>
    </citation>
    <scope>NUCLEOTIDE SEQUENCE [LARGE SCALE GENOMIC DNA]</scope>
    <source>
        <strain>IL1403</strain>
    </source>
</reference>
<evidence type="ECO:0000250" key="1"/>
<evidence type="ECO:0000255" key="2"/>
<evidence type="ECO:0000255" key="3">
    <source>
        <dbReference type="PROSITE-ProRule" id="PRU00217"/>
    </source>
</evidence>
<evidence type="ECO:0000256" key="4">
    <source>
        <dbReference type="SAM" id="MobiDB-lite"/>
    </source>
</evidence>
<evidence type="ECO:0000305" key="5"/>